<feature type="chain" id="PRO_1000056556" description="Trans-aconitate 2-methyltransferase">
    <location>
        <begin position="1"/>
        <end position="252"/>
    </location>
</feature>
<keyword id="KW-0963">Cytoplasm</keyword>
<keyword id="KW-0489">Methyltransferase</keyword>
<keyword id="KW-1185">Reference proteome</keyword>
<keyword id="KW-0949">S-adenosyl-L-methionine</keyword>
<keyword id="KW-0808">Transferase</keyword>
<dbReference type="EC" id="2.1.1.144" evidence="1"/>
<dbReference type="EMBL" id="CP000468">
    <property type="protein sequence ID" value="ABJ00939.1"/>
    <property type="molecule type" value="Genomic_DNA"/>
</dbReference>
<dbReference type="RefSeq" id="WP_001286589.1">
    <property type="nucleotide sequence ID" value="NC_008563.1"/>
</dbReference>
<dbReference type="SMR" id="A1AB99"/>
<dbReference type="KEGG" id="ecv:APECO1_639"/>
<dbReference type="HOGENOM" id="CLU_037990_5_2_6"/>
<dbReference type="Proteomes" id="UP000008216">
    <property type="component" value="Chromosome"/>
</dbReference>
<dbReference type="GO" id="GO:0005737">
    <property type="term" value="C:cytoplasm"/>
    <property type="evidence" value="ECO:0007669"/>
    <property type="project" value="UniProtKB-SubCell"/>
</dbReference>
<dbReference type="GO" id="GO:0030798">
    <property type="term" value="F:trans-aconitate 2-methyltransferase activity"/>
    <property type="evidence" value="ECO:0007669"/>
    <property type="project" value="UniProtKB-UniRule"/>
</dbReference>
<dbReference type="GO" id="GO:0032259">
    <property type="term" value="P:methylation"/>
    <property type="evidence" value="ECO:0007669"/>
    <property type="project" value="UniProtKB-KW"/>
</dbReference>
<dbReference type="CDD" id="cd02440">
    <property type="entry name" value="AdoMet_MTases"/>
    <property type="match status" value="1"/>
</dbReference>
<dbReference type="Gene3D" id="1.10.150.290">
    <property type="entry name" value="S-adenosyl-L-methionine-dependent methyltransferases"/>
    <property type="match status" value="1"/>
</dbReference>
<dbReference type="Gene3D" id="3.40.50.150">
    <property type="entry name" value="Vaccinia Virus protein VP39"/>
    <property type="match status" value="1"/>
</dbReference>
<dbReference type="HAMAP" id="MF_00560">
    <property type="entry name" value="Tran_acon_Me_trans"/>
    <property type="match status" value="1"/>
</dbReference>
<dbReference type="InterPro" id="IPR041698">
    <property type="entry name" value="Methyltransf_25"/>
</dbReference>
<dbReference type="InterPro" id="IPR029063">
    <property type="entry name" value="SAM-dependent_MTases_sf"/>
</dbReference>
<dbReference type="InterPro" id="IPR023506">
    <property type="entry name" value="Trans-aconitate_MeTrfase"/>
</dbReference>
<dbReference type="InterPro" id="IPR023149">
    <property type="entry name" value="Trans_acon_MeTrfase_C"/>
</dbReference>
<dbReference type="NCBIfam" id="NF002463">
    <property type="entry name" value="PRK01683.1"/>
    <property type="match status" value="1"/>
</dbReference>
<dbReference type="PANTHER" id="PTHR43861:SF1">
    <property type="entry name" value="TRANS-ACONITATE 2-METHYLTRANSFERASE"/>
    <property type="match status" value="1"/>
</dbReference>
<dbReference type="PANTHER" id="PTHR43861">
    <property type="entry name" value="TRANS-ACONITATE 2-METHYLTRANSFERASE-RELATED"/>
    <property type="match status" value="1"/>
</dbReference>
<dbReference type="Pfam" id="PF13649">
    <property type="entry name" value="Methyltransf_25"/>
    <property type="match status" value="1"/>
</dbReference>
<dbReference type="SUPFAM" id="SSF53335">
    <property type="entry name" value="S-adenosyl-L-methionine-dependent methyltransferases"/>
    <property type="match status" value="1"/>
</dbReference>
<comment type="function">
    <text evidence="1">Catalyzes the S-adenosylmethionine monomethyl esterification of trans-aconitate.</text>
</comment>
<comment type="catalytic activity">
    <reaction evidence="1">
        <text>trans-aconitate + S-adenosyl-L-methionine = (E)-3-(methoxycarbonyl)pent-2-enedioate + S-adenosyl-L-homocysteine</text>
        <dbReference type="Rhea" id="RHEA:14969"/>
        <dbReference type="ChEBI" id="CHEBI:15708"/>
        <dbReference type="ChEBI" id="CHEBI:57470"/>
        <dbReference type="ChEBI" id="CHEBI:57856"/>
        <dbReference type="ChEBI" id="CHEBI:59789"/>
        <dbReference type="EC" id="2.1.1.144"/>
    </reaction>
</comment>
<comment type="subcellular location">
    <subcellularLocation>
        <location evidence="1">Cytoplasm</location>
    </subcellularLocation>
</comment>
<comment type="similarity">
    <text evidence="1">Belongs to the methyltransferase superfamily. Tam family.</text>
</comment>
<sequence>MSDWNPSLYLHFAAERSRPAVELLARVSLENIEYIADLGCGTGNSTALLHQRWPAARITGIDSSPAMIAEARSALPDSLFVEADIRNWQPEQALDLIFANASLQWLPDHYELFPHLVSLLSPLGVLAVQMPDNWLEPTHVLMREVAWEQNYPDRGREPLAGVHAYYDILSEAGCEVDIWRTTYYHQMPSHQAIIDWVTATGLRPWLQDLTESEQQHFLTRYHQMLEEQYPLQENGQILLAFPRLFIVARRTE</sequence>
<protein>
    <recommendedName>
        <fullName evidence="1">Trans-aconitate 2-methyltransferase</fullName>
        <ecNumber evidence="1">2.1.1.144</ecNumber>
    </recommendedName>
</protein>
<organism>
    <name type="scientific">Escherichia coli O1:K1 / APEC</name>
    <dbReference type="NCBI Taxonomy" id="405955"/>
    <lineage>
        <taxon>Bacteria</taxon>
        <taxon>Pseudomonadati</taxon>
        <taxon>Pseudomonadota</taxon>
        <taxon>Gammaproteobacteria</taxon>
        <taxon>Enterobacterales</taxon>
        <taxon>Enterobacteriaceae</taxon>
        <taxon>Escherichia</taxon>
    </lineage>
</organism>
<accession>A1AB99</accession>
<gene>
    <name evidence="1" type="primary">tam</name>
    <name type="ordered locus">Ecok1_14450</name>
    <name type="ORF">APECO1_639</name>
</gene>
<reference key="1">
    <citation type="journal article" date="2007" name="J. Bacteriol.">
        <title>The genome sequence of avian pathogenic Escherichia coli strain O1:K1:H7 shares strong similarities with human extraintestinal pathogenic E. coli genomes.</title>
        <authorList>
            <person name="Johnson T.J."/>
            <person name="Kariyawasam S."/>
            <person name="Wannemuehler Y."/>
            <person name="Mangiamele P."/>
            <person name="Johnson S.J."/>
            <person name="Doetkott C."/>
            <person name="Skyberg J.A."/>
            <person name="Lynne A.M."/>
            <person name="Johnson J.R."/>
            <person name="Nolan L.K."/>
        </authorList>
    </citation>
    <scope>NUCLEOTIDE SEQUENCE [LARGE SCALE GENOMIC DNA]</scope>
</reference>
<name>TAM_ECOK1</name>
<proteinExistence type="inferred from homology"/>
<evidence type="ECO:0000255" key="1">
    <source>
        <dbReference type="HAMAP-Rule" id="MF_00560"/>
    </source>
</evidence>